<keyword id="KW-0179">Complement alternate pathway</keyword>
<keyword id="KW-1015">Disulfide bond</keyword>
<keyword id="KW-0325">Glycoprotein</keyword>
<keyword id="KW-0378">Hydrolase</keyword>
<keyword id="KW-0391">Immunity</keyword>
<keyword id="KW-0399">Innate immunity</keyword>
<keyword id="KW-0460">Magnesium</keyword>
<keyword id="KW-0479">Metal-binding</keyword>
<keyword id="KW-0645">Protease</keyword>
<keyword id="KW-1185">Reference proteome</keyword>
<keyword id="KW-0677">Repeat</keyword>
<keyword id="KW-0964">Secreted</keyword>
<keyword id="KW-0720">Serine protease</keyword>
<keyword id="KW-0732">Signal</keyword>
<keyword id="KW-0768">Sushi</keyword>
<protein>
    <recommendedName>
        <fullName>Complement factor B</fullName>
        <ecNumber evidence="1">3.4.21.47</ecNumber>
    </recommendedName>
    <alternativeName>
        <fullName>C3/C5 convertase</fullName>
    </alternativeName>
    <component>
        <recommendedName>
            <fullName>Complement factor B Ba</fullName>
        </recommendedName>
    </component>
    <component>
        <recommendedName>
            <fullName>Complement factor B Bb</fullName>
        </recommendedName>
    </component>
</protein>
<sequence>MGSNRCPRLGLVPLILGLLSGGVSMTPLPEARPQSPCSLEGIEIKGGTFHLLKEGLVLEYVCPSGFYPYPVQIRTCRSSGSWSTLQTQDRKIVKRAECKAIRCPRPQDFENGEYWPRAAYYNLSDEISFHCYDGYTLRGSANRTCQVTGRWDGQTAICDDGAGYCPNPGIPIGTRKVGTQYRLEDSVTYYCSRGLTLRGSQRRTCQEGGSWSGTEPSCQDSFMYDTPAEVAEAFLSSLTETIEGVDAEDGHIPGDQQKRKIVLDPSGSMNIYLVLDGSDSIGARNFTGAKNCLKDFIEKVASYGVKPKYGLVTYATDPKVLIRVSNPKSADADWVTEQLDKISYDDHKLKAGTNTKKALLEVYNMMSWGVNNFPDNWNRTRHVIVLLTDGLHNMGGDPVTVIHDIRDLLNIGRNRKNPREDYLDIYVFGVGPLVNQENINALASKKDKEQHVFKLKDVDNLEDVFFQMLDESRSLGLCGMVWEHKDGTDYHKQPWHAKISITRPSKGHESCMGAVVSEYFVLTAAHCFTVDDEKHSIKVSLGGKKQEWEIDQVLFHPNYDLNAKTAKDIPEFYDYDVALIRLSKKLKYDQTIRPICLPCTEGSNQALRLPLTTTCQQQMQELLPAKDVKALFVSELTKDHRKILTRKEVYIKNGERKAACERDALQAQGYEKVKVVSEVVTPRFLCTGGVIPYADPNTCKGDSGGPLIIHKKSRFIQVGVISWGVVDICKRQQQAPSYARDFHINLYKVLPWLKEKLKDEDLGFL</sequence>
<gene>
    <name type="primary">CFB</name>
    <name type="synonym">BF</name>
</gene>
<evidence type="ECO:0000250" key="1">
    <source>
        <dbReference type="UniProtKB" id="P00751"/>
    </source>
</evidence>
<evidence type="ECO:0000255" key="2"/>
<evidence type="ECO:0000255" key="3">
    <source>
        <dbReference type="PROSITE-ProRule" id="PRU00219"/>
    </source>
</evidence>
<evidence type="ECO:0000255" key="4">
    <source>
        <dbReference type="PROSITE-ProRule" id="PRU00274"/>
    </source>
</evidence>
<evidence type="ECO:0000255" key="5">
    <source>
        <dbReference type="PROSITE-ProRule" id="PRU00302"/>
    </source>
</evidence>
<evidence type="ECO:0000305" key="6"/>
<proteinExistence type="inferred from homology"/>
<organism>
    <name type="scientific">Sus scrofa</name>
    <name type="common">Pig</name>
    <dbReference type="NCBI Taxonomy" id="9823"/>
    <lineage>
        <taxon>Eukaryota</taxon>
        <taxon>Metazoa</taxon>
        <taxon>Chordata</taxon>
        <taxon>Craniata</taxon>
        <taxon>Vertebrata</taxon>
        <taxon>Euteleostomi</taxon>
        <taxon>Mammalia</taxon>
        <taxon>Eutheria</taxon>
        <taxon>Laurasiatheria</taxon>
        <taxon>Artiodactyla</taxon>
        <taxon>Suina</taxon>
        <taxon>Suidae</taxon>
        <taxon>Sus</taxon>
    </lineage>
</organism>
<reference key="1">
    <citation type="submission" date="2009-11" db="EMBL/GenBank/DDBJ databases">
        <authorList>
            <consortium name="Porcine genome sequencing project"/>
        </authorList>
    </citation>
    <scope>NUCLEOTIDE SEQUENCE [LARGE SCALE GENOMIC DNA]</scope>
</reference>
<reference key="2">
    <citation type="journal article" date="1991" name="Immunogenetics">
        <title>Cloning and sequencing of the porcine complement factor B.</title>
        <authorList>
            <person name="Peelman L.J."/>
            <person name="van de Weghe A.R."/>
            <person name="Coppieters W.R."/>
            <person name="van Zeveren A.J."/>
            <person name="Bouquet Y.H."/>
        </authorList>
    </citation>
    <scope>NUCLEOTIDE SEQUENCE [GENOMIC DNA] OF 100-250</scope>
</reference>
<comment type="function">
    <text evidence="1">Precursor of the catalytic component of the C3 and C5 convertase complexes of the alternative pathway of the complement system, a cascade of proteins that leads to phagocytosis and breakdown of pathogens and signaling that strengthens the adaptive immune system. The alternative complement pathway acts as an amplification loop that enhances other complement pathways (classical, lectin and GZMK) by promoting formation of additional C3 and C5 convertases. CFB is cleaved and activated by CFD to generate Ba and Bb chains; Bb chain constituting the catalytic component of the C3 and C5 convertases.</text>
</comment>
<comment type="function">
    <molecule>Complement factor B Bb</molecule>
    <text evidence="1">Serine protease component of the complement C3 and C5 convertase complexes of the alternative complement pathway. Following cleavage and activation by factor D (CFD), forms the C3 convertase together with complement C3b. As part of the C3 convertase, cleaves and activates C3 into C3a anaphylatoxin and C3b opsonin, the next components of the complement pathways. When an additional complement C3b molecule binds to the C3 convertase, forms the C5 convertase, which cleaves and activates C5 into C5a anaphylatoxin and C5b component of the membrane attack complex.</text>
</comment>
<comment type="function">
    <molecule>Complement factor B Ba</molecule>
    <text evidence="1">Involved in proliferation and differentiation of preactivated B-lymphocytes, rapid spreading of peripheral blood monocytes, stimulation of lymphocyte blastogenesis and lysis of erythrocytes.</text>
</comment>
<comment type="catalytic activity">
    <molecule>Complement factor B Bb</molecule>
    <reaction evidence="1">
        <text>Cleavage of Arg-|-Ser bond in complement component C3 alpha-chain to yield C3a and C3b, and Arg-|-Xaa bond in complement component C5 alpha-chain to yield C5a and C5b.</text>
        <dbReference type="EC" id="3.4.21.47"/>
    </reaction>
</comment>
<comment type="cofactor">
    <molecule>Complement factor B Bb</molecule>
    <cofactor evidence="1">
        <name>Mg(2+)</name>
        <dbReference type="ChEBI" id="CHEBI:18420"/>
    </cofactor>
    <cofactor evidence="1">
        <name>Mn(2+)</name>
        <dbReference type="ChEBI" id="CHEBI:29035"/>
    </cofactor>
</comment>
<comment type="subunit">
    <text evidence="1">Monomer. Interacts with complement C3b; this interaction is dependent on the presence of Mg(2+).</text>
</comment>
<comment type="subunit">
    <molecule>Complement factor B Bb</molecule>
    <text evidence="1">Catalytic component of the C3 convertase of the alternative complement pathway, also named C3bBb, composed of complement factor B Bb and complement C3b. Catalytic component of the C5 convertase of the alternative complement pathway, also named C3bBb3b, composed of complement factor B Bb and additional molecules of complement C3b. Interacts to CFP; this interaction contributes to the stabilization of the active C3-convertase enzyme complex.</text>
</comment>
<comment type="subcellular location">
    <subcellularLocation>
        <location evidence="1">Secreted</location>
    </subcellularLocation>
</comment>
<comment type="subcellular location">
    <molecule>Complement factor B Bb</molecule>
    <subcellularLocation>
        <location evidence="1">Cell surface</location>
    </subcellularLocation>
    <text evidence="1">Recruited to the surface of pathogens by complement C3b opsonin.</text>
</comment>
<comment type="domain">
    <text evidence="1">The unliganded VWA domain has an inactive 'locked' conformation whereby the scissile Arg-259|Lys-260 bond is protected from proteolytic activation.</text>
</comment>
<comment type="PTM">
    <text evidence="1">Cleaved by CFD following activation of the alternative complement system, generating Ba and Bb chains. Cleavage and activation takes place when CFB is already associated with complement C3b.</text>
</comment>
<comment type="similarity">
    <text evidence="4">Belongs to the peptidase S1 family.</text>
</comment>
<accession>Q03710</accession>
<accession>A0A287AAZ9</accession>
<dbReference type="EC" id="3.4.21.47" evidence="1"/>
<dbReference type="EMBL" id="DQIR01164727">
    <property type="protein sequence ID" value="HDB20204.1"/>
    <property type="molecule type" value="Transcribed_RNA"/>
</dbReference>
<dbReference type="EMBL" id="DQIR01165974">
    <property type="protein sequence ID" value="HDB21451.1"/>
    <property type="molecule type" value="Transcribed_RNA"/>
</dbReference>
<dbReference type="EMBL" id="M59240">
    <property type="protein sequence ID" value="AAA31021.1"/>
    <property type="molecule type" value="Genomic_DNA"/>
</dbReference>
<dbReference type="RefSeq" id="XP_020953515.1">
    <property type="nucleotide sequence ID" value="XM_021097856.1"/>
</dbReference>
<dbReference type="SMR" id="Q03710"/>
<dbReference type="FunCoup" id="Q03710">
    <property type="interactions" value="270"/>
</dbReference>
<dbReference type="STRING" id="9823.ENSSSCP00000029905"/>
<dbReference type="MEROPS" id="S01.196"/>
<dbReference type="GlyCosmos" id="Q03710">
    <property type="glycosylation" value="2 sites, No reported glycans"/>
</dbReference>
<dbReference type="GlyGen" id="Q03710">
    <property type="glycosylation" value="2 sites"/>
</dbReference>
<dbReference type="PaxDb" id="9823-ENSSSCP00000001522"/>
<dbReference type="PeptideAtlas" id="Q03710"/>
<dbReference type="Ensembl" id="ENSSSCT00000039670.3">
    <property type="protein sequence ID" value="ENSSSCP00000040984.2"/>
    <property type="gene ID" value="ENSSSCG00000024914.6"/>
</dbReference>
<dbReference type="Ensembl" id="ENSSSCT00085020578">
    <property type="protein sequence ID" value="ENSSSCP00085014055"/>
    <property type="gene ID" value="ENSSSCG00085011067"/>
</dbReference>
<dbReference type="GeneID" id="100124383"/>
<dbReference type="VGNC" id="VGNC:111467">
    <property type="gene designation" value="CFB"/>
</dbReference>
<dbReference type="eggNOG" id="KOG3627">
    <property type="taxonomic scope" value="Eukaryota"/>
</dbReference>
<dbReference type="GeneTree" id="ENSGT00940000158605"/>
<dbReference type="InParanoid" id="Q03710"/>
<dbReference type="OMA" id="PQKGHEN"/>
<dbReference type="OrthoDB" id="6127264at2759"/>
<dbReference type="Proteomes" id="UP000008227">
    <property type="component" value="Chromosome 7"/>
</dbReference>
<dbReference type="Proteomes" id="UP000314985">
    <property type="component" value="Unplaced"/>
</dbReference>
<dbReference type="Proteomes" id="UP000694570">
    <property type="component" value="Unplaced"/>
</dbReference>
<dbReference type="Proteomes" id="UP000694571">
    <property type="component" value="Unplaced"/>
</dbReference>
<dbReference type="Proteomes" id="UP000694720">
    <property type="component" value="Unplaced"/>
</dbReference>
<dbReference type="Proteomes" id="UP000694722">
    <property type="component" value="Unplaced"/>
</dbReference>
<dbReference type="Proteomes" id="UP000694723">
    <property type="component" value="Unplaced"/>
</dbReference>
<dbReference type="Proteomes" id="UP000694724">
    <property type="component" value="Unplaced"/>
</dbReference>
<dbReference type="Proteomes" id="UP000694725">
    <property type="component" value="Unplaced"/>
</dbReference>
<dbReference type="Proteomes" id="UP000694726">
    <property type="component" value="Unplaced"/>
</dbReference>
<dbReference type="Proteomes" id="UP000694727">
    <property type="component" value="Unplaced"/>
</dbReference>
<dbReference type="Proteomes" id="UP000694728">
    <property type="component" value="Unplaced"/>
</dbReference>
<dbReference type="Bgee" id="ENSSSCG00000024914">
    <property type="expression patterns" value="Expressed in liver and 34 other cell types or tissues"/>
</dbReference>
<dbReference type="ExpressionAtlas" id="A0A287AAZ9">
    <property type="expression patterns" value="baseline and differential"/>
</dbReference>
<dbReference type="GO" id="GO:0005576">
    <property type="term" value="C:extracellular region"/>
    <property type="evidence" value="ECO:0007669"/>
    <property type="project" value="UniProtKB-SubCell"/>
</dbReference>
<dbReference type="GO" id="GO:0004252">
    <property type="term" value="F:serine-type endopeptidase activity"/>
    <property type="evidence" value="ECO:0007669"/>
    <property type="project" value="UniProtKB-EC"/>
</dbReference>
<dbReference type="GO" id="GO:0006957">
    <property type="term" value="P:complement activation, alternative pathway"/>
    <property type="evidence" value="ECO:0007669"/>
    <property type="project" value="UniProtKB-KW"/>
</dbReference>
<dbReference type="GO" id="GO:0006508">
    <property type="term" value="P:proteolysis"/>
    <property type="evidence" value="ECO:0007669"/>
    <property type="project" value="UniProtKB-KW"/>
</dbReference>
<dbReference type="CDD" id="cd00033">
    <property type="entry name" value="CCP"/>
    <property type="match status" value="2"/>
</dbReference>
<dbReference type="FunFam" id="2.10.70.10:FF:000019">
    <property type="entry name" value="Complement factor b,-like"/>
    <property type="match status" value="2"/>
</dbReference>
<dbReference type="Gene3D" id="2.10.70.10">
    <property type="entry name" value="Complement Module, domain 1"/>
    <property type="match status" value="2"/>
</dbReference>
<dbReference type="InterPro" id="IPR035976">
    <property type="entry name" value="Sushi/SCR/CCP_sf"/>
</dbReference>
<dbReference type="InterPro" id="IPR000436">
    <property type="entry name" value="Sushi_SCR_CCP_dom"/>
</dbReference>
<dbReference type="PANTHER" id="PTHR46393:SF1">
    <property type="entry name" value="COMPLEMENT FACTOR B"/>
    <property type="match status" value="1"/>
</dbReference>
<dbReference type="PANTHER" id="PTHR46393">
    <property type="entry name" value="SUSHI DOMAIN-CONTAINING PROTEIN"/>
    <property type="match status" value="1"/>
</dbReference>
<dbReference type="Pfam" id="PF00084">
    <property type="entry name" value="Sushi"/>
    <property type="match status" value="2"/>
</dbReference>
<dbReference type="PIRSF" id="PIRSF001154">
    <property type="entry name" value="Compl_C2_B"/>
    <property type="match status" value="1"/>
</dbReference>
<dbReference type="PRINTS" id="PR00722">
    <property type="entry name" value="CHYMOTRYPSIN"/>
</dbReference>
<dbReference type="PRINTS" id="PR00453">
    <property type="entry name" value="VWFADOMAIN"/>
</dbReference>
<dbReference type="SMART" id="SM00032">
    <property type="entry name" value="CCP"/>
    <property type="match status" value="2"/>
</dbReference>
<dbReference type="SUPFAM" id="SSF57535">
    <property type="entry name" value="Complement control module/SCR domain"/>
    <property type="match status" value="2"/>
</dbReference>
<dbReference type="PROSITE" id="PS50923">
    <property type="entry name" value="SUSHI"/>
    <property type="match status" value="3"/>
</dbReference>
<dbReference type="PROSITE" id="PS50240">
    <property type="entry name" value="TRYPSIN_DOM"/>
    <property type="match status" value="1"/>
</dbReference>
<dbReference type="PROSITE" id="PS00134">
    <property type="entry name" value="TRYPSIN_HIS"/>
    <property type="match status" value="1"/>
</dbReference>
<dbReference type="PROSITE" id="PS00135">
    <property type="entry name" value="TRYPSIN_SER"/>
    <property type="match status" value="1"/>
</dbReference>
<dbReference type="PROSITE" id="PS50234">
    <property type="entry name" value="VWFA"/>
    <property type="match status" value="1"/>
</dbReference>
<feature type="signal peptide" evidence="1">
    <location>
        <begin position="1"/>
        <end position="25"/>
    </location>
</feature>
<feature type="chain" id="PRO_0000088663" description="Complement factor B">
    <location>
        <begin position="26"/>
        <end position="765"/>
    </location>
</feature>
<feature type="chain" id="PRO_0000462556" description="Complement factor B Ba" evidence="1">
    <location>
        <begin position="26"/>
        <end position="259"/>
    </location>
</feature>
<feature type="chain" id="PRO_0000462557" description="Complement factor B Bb" evidence="1">
    <location>
        <begin position="260"/>
        <end position="765"/>
    </location>
</feature>
<feature type="domain" description="Sushi 1" evidence="5">
    <location>
        <begin position="35"/>
        <end position="100"/>
    </location>
</feature>
<feature type="domain" description="Sushi 2" evidence="5">
    <location>
        <begin position="101"/>
        <end position="160"/>
    </location>
</feature>
<feature type="domain" description="Sushi 3" evidence="5">
    <location>
        <begin position="163"/>
        <end position="220"/>
    </location>
</feature>
<feature type="domain" description="VWFA" evidence="3">
    <location>
        <begin position="270"/>
        <end position="469"/>
    </location>
</feature>
<feature type="domain" description="Peptidase S1" evidence="4">
    <location>
        <begin position="477"/>
        <end position="758"/>
    </location>
</feature>
<feature type="active site" description="Charge relay system" evidence="4">
    <location>
        <position position="526"/>
    </location>
</feature>
<feature type="active site" description="Charge relay system" evidence="4">
    <location>
        <position position="576"/>
    </location>
</feature>
<feature type="active site" description="Charge relay system" evidence="4">
    <location>
        <position position="703"/>
    </location>
</feature>
<feature type="binding site" evidence="1">
    <location>
        <position position="278"/>
    </location>
    <ligand>
        <name>Mg(2+)</name>
        <dbReference type="ChEBI" id="CHEBI:18420"/>
    </ligand>
</feature>
<feature type="binding site" evidence="1">
    <location>
        <position position="280"/>
    </location>
    <ligand>
        <name>Mg(2+)</name>
        <dbReference type="ChEBI" id="CHEBI:18420"/>
    </ligand>
</feature>
<feature type="binding site" evidence="1">
    <location>
        <position position="353"/>
    </location>
    <ligand>
        <name>Mg(2+)</name>
        <dbReference type="ChEBI" id="CHEBI:18420"/>
    </ligand>
</feature>
<feature type="site" description="Cleavage; by CFD" evidence="1">
    <location>
        <begin position="259"/>
        <end position="260"/>
    </location>
</feature>
<feature type="glycosylation site" description="N-linked (GlcNAc...) asparagine" evidence="2">
    <location>
        <position position="122"/>
    </location>
</feature>
<feature type="glycosylation site" description="N-linked (GlcNAc...) asparagine" evidence="2">
    <location>
        <position position="142"/>
    </location>
</feature>
<feature type="glycosylation site" description="N-linked (GlcNAc...) asparagine" evidence="2">
    <location>
        <position position="285"/>
    </location>
</feature>
<feature type="glycosylation site" description="N-linked (GlcNAc...) asparagine" evidence="2">
    <location>
        <position position="378"/>
    </location>
</feature>
<feature type="disulfide bond" evidence="4">
    <location>
        <begin position="37"/>
        <end position="76"/>
    </location>
</feature>
<feature type="disulfide bond" evidence="4">
    <location>
        <begin position="62"/>
        <end position="98"/>
    </location>
</feature>
<feature type="disulfide bond" evidence="4">
    <location>
        <begin position="103"/>
        <end position="145"/>
    </location>
</feature>
<feature type="disulfide bond" evidence="4">
    <location>
        <begin position="131"/>
        <end position="158"/>
    </location>
</feature>
<feature type="disulfide bond" evidence="4">
    <location>
        <begin position="165"/>
        <end position="205"/>
    </location>
</feature>
<feature type="disulfide bond" evidence="4">
    <location>
        <begin position="191"/>
        <end position="218"/>
    </location>
</feature>
<feature type="disulfide bond" evidence="1">
    <location>
        <begin position="478"/>
        <end position="596"/>
    </location>
</feature>
<feature type="disulfide bond" evidence="4">
    <location>
        <begin position="511"/>
        <end position="527"/>
    </location>
</feature>
<feature type="disulfide bond" evidence="1">
    <location>
        <begin position="599"/>
        <end position="615"/>
    </location>
</feature>
<feature type="disulfide bond" evidence="1">
    <location>
        <begin position="660"/>
        <end position="686"/>
    </location>
</feature>
<feature type="disulfide bond" evidence="4">
    <location>
        <begin position="699"/>
        <end position="729"/>
    </location>
</feature>
<feature type="sequence conflict" description="In Ref. 2; AAA31021." evidence="6" ref="2">
    <original>Q</original>
    <variation>H</variation>
    <location>
        <position position="107"/>
    </location>
</feature>
<feature type="sequence conflict" description="In Ref. 2; AAA31021." evidence="6" ref="2">
    <original>A</original>
    <variation>P</variation>
    <location>
        <position position="119"/>
    </location>
</feature>
<feature type="sequence conflict" description="In Ref. 2; AAA31021." evidence="6" ref="2">
    <original>S</original>
    <variation>T</variation>
    <location>
        <position position="192"/>
    </location>
</feature>
<name>CFAB_PIG</name>